<feature type="initiator methionine" description="Removed" evidence="5 6">
    <location>
        <position position="1"/>
    </location>
</feature>
<feature type="chain" id="PRO_0000199326" description="C-1-tetrahydrofolate synthase, cytoplasmic">
    <location>
        <begin position="2"/>
        <end position="946"/>
    </location>
</feature>
<feature type="region of interest" description="Methylenetetrahydrofolate dehydrogenase and cyclohydrolase" evidence="9">
    <location>
        <begin position="2"/>
        <end position="319"/>
    </location>
</feature>
<feature type="region of interest" description="Formyltetrahydrofolate synthetase" evidence="9">
    <location>
        <begin position="320"/>
        <end position="946"/>
    </location>
</feature>
<feature type="binding site" evidence="1">
    <location>
        <begin position="51"/>
        <end position="55"/>
    </location>
    <ligand>
        <name>substrate</name>
    </ligand>
</feature>
<feature type="binding site" evidence="1">
    <location>
        <begin position="98"/>
        <end position="100"/>
    </location>
    <ligand>
        <name>substrate</name>
    </ligand>
</feature>
<feature type="binding site" evidence="1">
    <location>
        <begin position="169"/>
        <end position="171"/>
    </location>
    <ligand>
        <name>NADP(+)</name>
        <dbReference type="ChEBI" id="CHEBI:58349"/>
    </ligand>
</feature>
<feature type="binding site" evidence="1">
    <location>
        <position position="194"/>
    </location>
    <ligand>
        <name>NADP(+)</name>
        <dbReference type="ChEBI" id="CHEBI:58349"/>
    </ligand>
</feature>
<feature type="binding site" evidence="1">
    <location>
        <begin position="277"/>
        <end position="281"/>
    </location>
    <ligand>
        <name>substrate</name>
    </ligand>
</feature>
<feature type="binding site" evidence="1">
    <location>
        <begin position="384"/>
        <end position="391"/>
    </location>
    <ligand>
        <name>ATP</name>
        <dbReference type="ChEBI" id="CHEBI:30616"/>
    </ligand>
</feature>
<feature type="modified residue" description="Phosphoserine" evidence="11 12">
    <location>
        <position position="176"/>
    </location>
</feature>
<feature type="modified residue" description="Phosphothreonine" evidence="12">
    <location>
        <position position="318"/>
    </location>
</feature>
<feature type="modified residue" description="Phosphoserine" evidence="12">
    <location>
        <position position="322"/>
    </location>
</feature>
<feature type="mutagenesis site" description="Almost no effect on activity." evidence="4">
    <original>C</original>
    <variation>S</variation>
    <location>
        <position position="11"/>
    </location>
</feature>
<feature type="mutagenesis site" description="Cyclohydrolase activity is reduced 20-fold. Dehydrogenase Km is increased 7-fold." evidence="4">
    <original>C</original>
    <variation>S</variation>
    <location>
        <position position="144"/>
    </location>
</feature>
<feature type="mutagenesis site" description="Cyclohydrolase activity is increased 2-fold. Dehydrogenase Km is increased 2-fold." evidence="4">
    <original>C</original>
    <variation>S</variation>
    <location>
        <position position="257"/>
    </location>
</feature>
<feature type="sequence conflict" description="In Ref. 6; AA sequence." evidence="8" ref="6">
    <original>Q</original>
    <variation>P</variation>
    <location>
        <position position="4"/>
    </location>
</feature>
<sequence>MAGQVLDGKACAQQFRSNIANEIKSIQGHVPGFAPNLAIIQVGNRPDSATYVRMKRKAAEEAGIVANFIHLDESATEFEVLRYVDQLNEDPHTHGIIVQLPLPAHLDEDRITSRVLAEKDVDGFGPTNIGELNKKNGHPFFLPCTPKGIIELLHKANVTIEGSRSVVIGRSDIVGSPVAELLKSLNSTVTITHSKTRDIASYLHDADIVVVAIGQPEFVKGEWFKPRDGTSSDKKTVVIDVGTNYVADPSKKSGFKCVGDVEFNEAIKYVHLITPVPGGVGPMTVAMLMQNTLIAAKRQMEESSKPLQIPPLPLKLLTPVPSDIDISRAQQPKLINQLAQELGIYSHELELYGHYKAKISPKVIERLQTRQNGKYILVSGITPTPLGEGKSTTTMGLVQALTAHLGKPAIANVRQPSLGPTLGVKGGAAGGGYSQVIPMDEFNLHLTGDIHAIGAANNLLAAAIDTRMFHETTQKNDATFYNRLVPRKNGKRKFTPSMQRRLNRLGIQKTNPDDLTPEEINKFARLNIDPDTITIKRVVDINDRMLRQITIGQAPTEKNHTRVTGFDITVASELMAILALSKDLRDMKERIGRVVVAADVNRSPVTVEDVGCTGALTALLRDAIKPNLMQTLEGTPVLVHAGPFANISIGASSVIADRVALKLVGTEPEAKTEAGYVVTEAGFDFTMGGERFFNIKCRSSGLTPNAVVLVATVRALKSHGGAPDVKPGQPLPSAYTEENIEFVEKGAANMCKQIANIKQFGVPVVVAINKFETDTEGEIAAIRKAALEAGAFEAVTSNHWAEGGKGAIDLAKAVIEASNQPVDFHFLYDVNSSVEDKLTTIVQKMYGGAAIDILPEAQRKIDMYKEQGFGNLPICIAKTQYSLSHDATLKGVPTGFTFPIRDVRLSNGAGYLYALAAEIQTIPGLATYAGYMAVEVDDDGEIDGLF</sequence>
<proteinExistence type="evidence at protein level"/>
<keyword id="KW-0028">Amino-acid biosynthesis</keyword>
<keyword id="KW-0067">ATP-binding</keyword>
<keyword id="KW-0963">Cytoplasm</keyword>
<keyword id="KW-0903">Direct protein sequencing</keyword>
<keyword id="KW-0368">Histidine biosynthesis</keyword>
<keyword id="KW-0378">Hydrolase</keyword>
<keyword id="KW-0436">Ligase</keyword>
<keyword id="KW-0486">Methionine biosynthesis</keyword>
<keyword id="KW-0511">Multifunctional enzyme</keyword>
<keyword id="KW-0521">NADP</keyword>
<keyword id="KW-0547">Nucleotide-binding</keyword>
<keyword id="KW-0539">Nucleus</keyword>
<keyword id="KW-0554">One-carbon metabolism</keyword>
<keyword id="KW-0560">Oxidoreductase</keyword>
<keyword id="KW-0597">Phosphoprotein</keyword>
<keyword id="KW-0658">Purine biosynthesis</keyword>
<keyword id="KW-1185">Reference proteome</keyword>
<accession>P07245</accession>
<accession>D6VUY6</accession>
<dbReference type="EC" id="1.5.1.5" evidence="6 7"/>
<dbReference type="EC" id="3.5.4.9" evidence="6 10"/>
<dbReference type="EC" id="6.3.4.3" evidence="6 7"/>
<dbReference type="EMBL" id="M12878">
    <property type="protein sequence ID" value="AAA66316.1"/>
    <property type="molecule type" value="Genomic_DNA"/>
</dbReference>
<dbReference type="EMBL" id="Z49133">
    <property type="protein sequence ID" value="CAA88997.1"/>
    <property type="molecule type" value="Genomic_DNA"/>
</dbReference>
<dbReference type="EMBL" id="Z72989">
    <property type="protein sequence ID" value="CAA97231.1"/>
    <property type="molecule type" value="Genomic_DNA"/>
</dbReference>
<dbReference type="EMBL" id="AY692966">
    <property type="protein sequence ID" value="AAT92985.1"/>
    <property type="molecule type" value="Genomic_DNA"/>
</dbReference>
<dbReference type="EMBL" id="BK006941">
    <property type="protein sequence ID" value="DAA08297.1"/>
    <property type="molecule type" value="Genomic_DNA"/>
</dbReference>
<dbReference type="PIR" id="A29550">
    <property type="entry name" value="A29550"/>
</dbReference>
<dbReference type="RefSeq" id="NP_011720.3">
    <property type="nucleotide sequence ID" value="NM_001181333.3"/>
</dbReference>
<dbReference type="SMR" id="P07245"/>
<dbReference type="BioGRID" id="33457">
    <property type="interactions" value="91"/>
</dbReference>
<dbReference type="DIP" id="DIP-3867N"/>
<dbReference type="FunCoup" id="P07245">
    <property type="interactions" value="1128"/>
</dbReference>
<dbReference type="IntAct" id="P07245">
    <property type="interactions" value="25"/>
</dbReference>
<dbReference type="MINT" id="P07245"/>
<dbReference type="STRING" id="4932.YGR204W"/>
<dbReference type="GlyGen" id="P07245">
    <property type="glycosylation" value="1 site"/>
</dbReference>
<dbReference type="iPTMnet" id="P07245"/>
<dbReference type="PaxDb" id="4932-YGR204W"/>
<dbReference type="PeptideAtlas" id="P07245"/>
<dbReference type="EnsemblFungi" id="YGR204W_mRNA">
    <property type="protein sequence ID" value="YGR204W"/>
    <property type="gene ID" value="YGR204W"/>
</dbReference>
<dbReference type="GeneID" id="853118"/>
<dbReference type="KEGG" id="sce:YGR204W"/>
<dbReference type="AGR" id="SGD:S000003436"/>
<dbReference type="SGD" id="S000003436">
    <property type="gene designation" value="ADE3"/>
</dbReference>
<dbReference type="VEuPathDB" id="FungiDB:YGR204W"/>
<dbReference type="eggNOG" id="KOG4230">
    <property type="taxonomic scope" value="Eukaryota"/>
</dbReference>
<dbReference type="HOGENOM" id="CLU_003601_2_0_1"/>
<dbReference type="InParanoid" id="P07245"/>
<dbReference type="OMA" id="CKQIANI"/>
<dbReference type="OrthoDB" id="5126881at2759"/>
<dbReference type="BioCyc" id="YEAST:YGR204W-MONOMER"/>
<dbReference type="BRENDA" id="3.5.4.9">
    <property type="organism ID" value="984"/>
</dbReference>
<dbReference type="BRENDA" id="6.3.4.3">
    <property type="organism ID" value="984"/>
</dbReference>
<dbReference type="Reactome" id="R-SCE-196757">
    <property type="pathway name" value="Metabolism of folate and pterines"/>
</dbReference>
<dbReference type="UniPathway" id="UPA00193"/>
<dbReference type="BioGRID-ORCS" id="853118">
    <property type="hits" value="4 hits in 10 CRISPR screens"/>
</dbReference>
<dbReference type="PRO" id="PR:P07245"/>
<dbReference type="Proteomes" id="UP000002311">
    <property type="component" value="Chromosome VII"/>
</dbReference>
<dbReference type="RNAct" id="P07245">
    <property type="molecule type" value="protein"/>
</dbReference>
<dbReference type="GO" id="GO:0005737">
    <property type="term" value="C:cytoplasm"/>
    <property type="evidence" value="ECO:0007005"/>
    <property type="project" value="SGD"/>
</dbReference>
<dbReference type="GO" id="GO:0005829">
    <property type="term" value="C:cytosol"/>
    <property type="evidence" value="ECO:0000318"/>
    <property type="project" value="GO_Central"/>
</dbReference>
<dbReference type="GO" id="GO:0005634">
    <property type="term" value="C:nucleus"/>
    <property type="evidence" value="ECO:0007005"/>
    <property type="project" value="SGD"/>
</dbReference>
<dbReference type="GO" id="GO:0005524">
    <property type="term" value="F:ATP binding"/>
    <property type="evidence" value="ECO:0007669"/>
    <property type="project" value="UniProtKB-KW"/>
</dbReference>
<dbReference type="GO" id="GO:0004329">
    <property type="term" value="F:formate-tetrahydrofolate ligase activity"/>
    <property type="evidence" value="ECO:0000315"/>
    <property type="project" value="SGD"/>
</dbReference>
<dbReference type="GO" id="GO:0004477">
    <property type="term" value="F:methenyltetrahydrofolate cyclohydrolase activity"/>
    <property type="evidence" value="ECO:0000315"/>
    <property type="project" value="SGD"/>
</dbReference>
<dbReference type="GO" id="GO:0004488">
    <property type="term" value="F:methylenetetrahydrofolate dehydrogenase (NADP+) activity"/>
    <property type="evidence" value="ECO:0000315"/>
    <property type="project" value="SGD"/>
</dbReference>
<dbReference type="GO" id="GO:0006760">
    <property type="term" value="P:folic acid-containing compound metabolic process"/>
    <property type="evidence" value="ECO:0000315"/>
    <property type="project" value="SGD"/>
</dbReference>
<dbReference type="GO" id="GO:0000105">
    <property type="term" value="P:L-histidine biosynthetic process"/>
    <property type="evidence" value="ECO:0007669"/>
    <property type="project" value="UniProtKB-KW"/>
</dbReference>
<dbReference type="GO" id="GO:0009086">
    <property type="term" value="P:methionine biosynthetic process"/>
    <property type="evidence" value="ECO:0007669"/>
    <property type="project" value="UniProtKB-KW"/>
</dbReference>
<dbReference type="GO" id="GO:0009113">
    <property type="term" value="P:purine nucleobase biosynthetic process"/>
    <property type="evidence" value="ECO:0000315"/>
    <property type="project" value="SGD"/>
</dbReference>
<dbReference type="GO" id="GO:0006164">
    <property type="term" value="P:purine nucleotide biosynthetic process"/>
    <property type="evidence" value="ECO:0007669"/>
    <property type="project" value="UniProtKB-KW"/>
</dbReference>
<dbReference type="GO" id="GO:0035999">
    <property type="term" value="P:tetrahydrofolate interconversion"/>
    <property type="evidence" value="ECO:0000318"/>
    <property type="project" value="GO_Central"/>
</dbReference>
<dbReference type="CDD" id="cd00477">
    <property type="entry name" value="FTHFS"/>
    <property type="match status" value="1"/>
</dbReference>
<dbReference type="CDD" id="cd01080">
    <property type="entry name" value="NAD_bind_m-THF_DH_Cyclohyd"/>
    <property type="match status" value="1"/>
</dbReference>
<dbReference type="FunFam" id="3.40.50.720:FF:000006">
    <property type="entry name" value="Bifunctional protein FolD"/>
    <property type="match status" value="1"/>
</dbReference>
<dbReference type="FunFam" id="3.40.50.300:FF:000245">
    <property type="entry name" value="C-1-tetrahydrofolate synthase, cytoplasmic"/>
    <property type="match status" value="1"/>
</dbReference>
<dbReference type="FunFam" id="3.40.50.300:FF:001123">
    <property type="entry name" value="C-1-tetrahydrofolate synthase, cytoplasmic isoform X2"/>
    <property type="match status" value="1"/>
</dbReference>
<dbReference type="FunFam" id="3.40.50.10860:FF:000005">
    <property type="entry name" value="C-1-tetrahydrofolate synthase, cytoplasmic, putative"/>
    <property type="match status" value="1"/>
</dbReference>
<dbReference type="FunFam" id="3.30.1510.10:FF:000004">
    <property type="entry name" value="C1-tetrahydrofolate synthase"/>
    <property type="match status" value="1"/>
</dbReference>
<dbReference type="FunFam" id="3.10.410.10:FF:000001">
    <property type="entry name" value="Putative formate--tetrahydrofolate ligase"/>
    <property type="match status" value="1"/>
</dbReference>
<dbReference type="Gene3D" id="3.10.410.10">
    <property type="entry name" value="Formyltetrahydrofolate synthetase, domain 3"/>
    <property type="match status" value="1"/>
</dbReference>
<dbReference type="Gene3D" id="3.40.50.10860">
    <property type="entry name" value="Leucine Dehydrogenase, chain A, domain 1"/>
    <property type="match status" value="1"/>
</dbReference>
<dbReference type="Gene3D" id="3.40.50.720">
    <property type="entry name" value="NAD(P)-binding Rossmann-like Domain"/>
    <property type="match status" value="1"/>
</dbReference>
<dbReference type="Gene3D" id="3.40.50.300">
    <property type="entry name" value="P-loop containing nucleotide triphosphate hydrolases"/>
    <property type="match status" value="2"/>
</dbReference>
<dbReference type="HAMAP" id="MF_01543">
    <property type="entry name" value="FTHFS"/>
    <property type="match status" value="1"/>
</dbReference>
<dbReference type="HAMAP" id="MF_01576">
    <property type="entry name" value="THF_DHG_CYH"/>
    <property type="match status" value="1"/>
</dbReference>
<dbReference type="InterPro" id="IPR046346">
    <property type="entry name" value="Aminoacid_DH-like_N_sf"/>
</dbReference>
<dbReference type="InterPro" id="IPR000559">
    <property type="entry name" value="Formate_THF_ligase"/>
</dbReference>
<dbReference type="InterPro" id="IPR020628">
    <property type="entry name" value="Formate_THF_ligase_CS"/>
</dbReference>
<dbReference type="InterPro" id="IPR036291">
    <property type="entry name" value="NAD(P)-bd_dom_sf"/>
</dbReference>
<dbReference type="InterPro" id="IPR027417">
    <property type="entry name" value="P-loop_NTPase"/>
</dbReference>
<dbReference type="InterPro" id="IPR000672">
    <property type="entry name" value="THF_DH/CycHdrlase"/>
</dbReference>
<dbReference type="InterPro" id="IPR020630">
    <property type="entry name" value="THF_DH/CycHdrlase_cat_dom"/>
</dbReference>
<dbReference type="InterPro" id="IPR020867">
    <property type="entry name" value="THF_DH/CycHdrlase_CS"/>
</dbReference>
<dbReference type="InterPro" id="IPR020631">
    <property type="entry name" value="THF_DH/CycHdrlase_NAD-bd_dom"/>
</dbReference>
<dbReference type="PANTHER" id="PTHR48099:SF5">
    <property type="entry name" value="C-1-TETRAHYDROFOLATE SYNTHASE, CYTOPLASMIC"/>
    <property type="match status" value="1"/>
</dbReference>
<dbReference type="PANTHER" id="PTHR48099">
    <property type="entry name" value="C-1-TETRAHYDROFOLATE SYNTHASE, CYTOPLASMIC-RELATED"/>
    <property type="match status" value="1"/>
</dbReference>
<dbReference type="Pfam" id="PF01268">
    <property type="entry name" value="FTHFS"/>
    <property type="match status" value="1"/>
</dbReference>
<dbReference type="Pfam" id="PF00763">
    <property type="entry name" value="THF_DHG_CYH"/>
    <property type="match status" value="1"/>
</dbReference>
<dbReference type="Pfam" id="PF02882">
    <property type="entry name" value="THF_DHG_CYH_C"/>
    <property type="match status" value="1"/>
</dbReference>
<dbReference type="PRINTS" id="PR00085">
    <property type="entry name" value="THFDHDRGNASE"/>
</dbReference>
<dbReference type="SUPFAM" id="SSF53223">
    <property type="entry name" value="Aminoacid dehydrogenase-like, N-terminal domain"/>
    <property type="match status" value="1"/>
</dbReference>
<dbReference type="SUPFAM" id="SSF51735">
    <property type="entry name" value="NAD(P)-binding Rossmann-fold domains"/>
    <property type="match status" value="1"/>
</dbReference>
<dbReference type="SUPFAM" id="SSF52540">
    <property type="entry name" value="P-loop containing nucleoside triphosphate hydrolases"/>
    <property type="match status" value="1"/>
</dbReference>
<dbReference type="PROSITE" id="PS00721">
    <property type="entry name" value="FTHFS_1"/>
    <property type="match status" value="1"/>
</dbReference>
<dbReference type="PROSITE" id="PS00722">
    <property type="entry name" value="FTHFS_2"/>
    <property type="match status" value="1"/>
</dbReference>
<dbReference type="PROSITE" id="PS00766">
    <property type="entry name" value="THF_DHG_CYH_1"/>
    <property type="match status" value="1"/>
</dbReference>
<dbReference type="PROSITE" id="PS00767">
    <property type="entry name" value="THF_DHG_CYH_2"/>
    <property type="match status" value="1"/>
</dbReference>
<gene>
    <name type="primary">ADE3</name>
    <name type="ordered locus">YGR204W</name>
    <name type="ORF">G7733</name>
</gene>
<evidence type="ECO:0000250" key="1"/>
<evidence type="ECO:0000269" key="2">
    <source>
    </source>
</evidence>
<evidence type="ECO:0000269" key="3">
    <source>
    </source>
</evidence>
<evidence type="ECO:0000269" key="4">
    <source>
    </source>
</evidence>
<evidence type="ECO:0000269" key="5">
    <source>
    </source>
</evidence>
<evidence type="ECO:0000269" key="6">
    <source>
    </source>
</evidence>
<evidence type="ECO:0000269" key="7">
    <source>
    </source>
</evidence>
<evidence type="ECO:0000305" key="8"/>
<evidence type="ECO:0000305" key="9">
    <source>
    </source>
</evidence>
<evidence type="ECO:0000305" key="10">
    <source>
    </source>
</evidence>
<evidence type="ECO:0007744" key="11">
    <source>
    </source>
</evidence>
<evidence type="ECO:0007744" key="12">
    <source>
    </source>
</evidence>
<organism>
    <name type="scientific">Saccharomyces cerevisiae (strain ATCC 204508 / S288c)</name>
    <name type="common">Baker's yeast</name>
    <dbReference type="NCBI Taxonomy" id="559292"/>
    <lineage>
        <taxon>Eukaryota</taxon>
        <taxon>Fungi</taxon>
        <taxon>Dikarya</taxon>
        <taxon>Ascomycota</taxon>
        <taxon>Saccharomycotina</taxon>
        <taxon>Saccharomycetes</taxon>
        <taxon>Saccharomycetales</taxon>
        <taxon>Saccharomycetaceae</taxon>
        <taxon>Saccharomyces</taxon>
    </lineage>
</organism>
<comment type="function">
    <text evidence="5 6 7">Cytoplasmic isozyme of C-1-tetrahydrofolate synthase. The trifunctional enzyme catalyzes the interconversion of the one-carbon derivatives of tetrahydrofolate (THF) between different oxidation states by the enzymatic activities 10-formyltetrahydrofolate synthetase, 5,lO-methenyltetrahydrofolate cyclohydrolase, and 5,lO-methylenetetrahydrofolate dehydrogenase. Involved in the generation of one-carbon intermediates in the biosynthesis of the purine bases.</text>
</comment>
<comment type="catalytic activity">
    <reaction evidence="6 7">
        <text>(6R)-5,10-methylene-5,6,7,8-tetrahydrofolate + NADP(+) = (6R)-5,10-methenyltetrahydrofolate + NADPH</text>
        <dbReference type="Rhea" id="RHEA:22812"/>
        <dbReference type="ChEBI" id="CHEBI:15636"/>
        <dbReference type="ChEBI" id="CHEBI:57455"/>
        <dbReference type="ChEBI" id="CHEBI:57783"/>
        <dbReference type="ChEBI" id="CHEBI:58349"/>
        <dbReference type="EC" id="1.5.1.5"/>
    </reaction>
    <physiologicalReaction direction="left-to-right" evidence="9 10">
        <dbReference type="Rhea" id="RHEA:22813"/>
    </physiologicalReaction>
    <physiologicalReaction direction="right-to-left" evidence="9 10">
        <dbReference type="Rhea" id="RHEA:22814"/>
    </physiologicalReaction>
</comment>
<comment type="catalytic activity">
    <reaction evidence="6 10">
        <text>(6R)-5,10-methenyltetrahydrofolate + H2O = (6R)-10-formyltetrahydrofolate + H(+)</text>
        <dbReference type="Rhea" id="RHEA:23700"/>
        <dbReference type="ChEBI" id="CHEBI:15377"/>
        <dbReference type="ChEBI" id="CHEBI:15378"/>
        <dbReference type="ChEBI" id="CHEBI:57455"/>
        <dbReference type="ChEBI" id="CHEBI:195366"/>
        <dbReference type="EC" id="3.5.4.9"/>
    </reaction>
    <physiologicalReaction direction="left-to-right" evidence="9 10">
        <dbReference type="Rhea" id="RHEA:23701"/>
    </physiologicalReaction>
    <physiologicalReaction direction="right-to-left" evidence="9 10">
        <dbReference type="Rhea" id="RHEA:23702"/>
    </physiologicalReaction>
</comment>
<comment type="catalytic activity">
    <reaction evidence="6 7">
        <text>(6S)-5,6,7,8-tetrahydrofolate + formate + ATP = (6R)-10-formyltetrahydrofolate + ADP + phosphate</text>
        <dbReference type="Rhea" id="RHEA:20221"/>
        <dbReference type="ChEBI" id="CHEBI:15740"/>
        <dbReference type="ChEBI" id="CHEBI:30616"/>
        <dbReference type="ChEBI" id="CHEBI:43474"/>
        <dbReference type="ChEBI" id="CHEBI:57453"/>
        <dbReference type="ChEBI" id="CHEBI:195366"/>
        <dbReference type="ChEBI" id="CHEBI:456216"/>
        <dbReference type="EC" id="6.3.4.3"/>
    </reaction>
    <physiologicalReaction direction="left-to-right" evidence="9 10">
        <dbReference type="Rhea" id="RHEA:20222"/>
    </physiologicalReaction>
    <physiologicalReaction direction="right-to-left" evidence="9 10">
        <dbReference type="Rhea" id="RHEA:20223"/>
    </physiologicalReaction>
</comment>
<comment type="pathway">
    <text>One-carbon metabolism; tetrahydrofolate interconversion.</text>
</comment>
<comment type="subunit">
    <text evidence="5">Homodimer.</text>
</comment>
<comment type="subcellular location">
    <subcellularLocation>
        <location evidence="2">Cytoplasm</location>
    </subcellularLocation>
    <subcellularLocation>
        <location evidence="2">Nucleus</location>
    </subcellularLocation>
</comment>
<comment type="domain">
    <text evidence="9">This trifunctional enzyme consists of two major domains: an N-terminal part containing the methylene-THF dehydrogenase and cyclohydrolase activities and a larger C-terminal part containing formyl-THF synthetase activity.</text>
</comment>
<comment type="miscellaneous">
    <text evidence="3">Present with 35600 molecules/cell in log phase SD medium.</text>
</comment>
<comment type="similarity">
    <text evidence="8">In the N-terminal section; belongs to the tetrahydrofolate dehydrogenase/cyclohydrolase family.</text>
</comment>
<comment type="similarity">
    <text evidence="8">In the C-terminal section; belongs to the formate--tetrahydrofolate ligase family.</text>
</comment>
<reference key="1">
    <citation type="journal article" date="1986" name="J. Biol. Chem.">
        <title>Nucleotide sequence of the Saccharomyces cerevisiae ADE3 gene encoding C1-tetrahydrofolate synthase.</title>
        <authorList>
            <person name="Staben C."/>
            <person name="Rabinowitz J.C."/>
        </authorList>
    </citation>
    <scope>NUCLEOTIDE SEQUENCE [GENOMIC DNA]</scope>
    <scope>PROTEIN SEQUENCE OF 2-10</scope>
    <scope>FUNCTION</scope>
    <scope>CATALYTIC ACTIVITY</scope>
    <scope>DOMAIN</scope>
</reference>
<reference key="2">
    <citation type="journal article" date="1996" name="Yeast">
        <title>Sequencing of a 17.6 kb segment on the right arm of yeast chromosome VII reveals 12 ORFs, including CCT, ADE3 and TR-I genes, homologues of the yeast PMT and EF1G genes, of the human and bacterial electron-transferring flavoproteins (beta-chain) and of the Escherichia coli phosphoserine phosphohydrolase, and five new ORFs.</title>
        <authorList>
            <person name="Guerreiro P."/>
            <person name="Barreiros T."/>
            <person name="Soares H."/>
            <person name="Cyrne L."/>
            <person name="Maia e Silva A."/>
            <person name="Rodrigues-Pousada C."/>
        </authorList>
    </citation>
    <scope>NUCLEOTIDE SEQUENCE [GENOMIC DNA]</scope>
    <source>
        <strain>ATCC 204508 / S288c</strain>
    </source>
</reference>
<reference key="3">
    <citation type="journal article" date="1997" name="Nature">
        <title>The nucleotide sequence of Saccharomyces cerevisiae chromosome VII.</title>
        <authorList>
            <person name="Tettelin H."/>
            <person name="Agostoni-Carbone M.L."/>
            <person name="Albermann K."/>
            <person name="Albers M."/>
            <person name="Arroyo J."/>
            <person name="Backes U."/>
            <person name="Barreiros T."/>
            <person name="Bertani I."/>
            <person name="Bjourson A.J."/>
            <person name="Brueckner M."/>
            <person name="Bruschi C.V."/>
            <person name="Carignani G."/>
            <person name="Castagnoli L."/>
            <person name="Cerdan E."/>
            <person name="Clemente M.L."/>
            <person name="Coblenz A."/>
            <person name="Coglievina M."/>
            <person name="Coissac E."/>
            <person name="Defoor E."/>
            <person name="Del Bino S."/>
            <person name="Delius H."/>
            <person name="Delneri D."/>
            <person name="de Wergifosse P."/>
            <person name="Dujon B."/>
            <person name="Durand P."/>
            <person name="Entian K.-D."/>
            <person name="Eraso P."/>
            <person name="Escribano V."/>
            <person name="Fabiani L."/>
            <person name="Fartmann B."/>
            <person name="Feroli F."/>
            <person name="Feuermann M."/>
            <person name="Frontali L."/>
            <person name="Garcia-Gonzalez M."/>
            <person name="Garcia-Saez M.I."/>
            <person name="Goffeau A."/>
            <person name="Guerreiro P."/>
            <person name="Hani J."/>
            <person name="Hansen M."/>
            <person name="Hebling U."/>
            <person name="Hernandez K."/>
            <person name="Heumann K."/>
            <person name="Hilger F."/>
            <person name="Hofmann B."/>
            <person name="Indge K.J."/>
            <person name="James C.M."/>
            <person name="Klima R."/>
            <person name="Koetter P."/>
            <person name="Kramer B."/>
            <person name="Kramer W."/>
            <person name="Lauquin G."/>
            <person name="Leuther H."/>
            <person name="Louis E.J."/>
            <person name="Maillier E."/>
            <person name="Marconi A."/>
            <person name="Martegani E."/>
            <person name="Mazon M.J."/>
            <person name="Mazzoni C."/>
            <person name="McReynolds A.D.K."/>
            <person name="Melchioretto P."/>
            <person name="Mewes H.-W."/>
            <person name="Minenkova O."/>
            <person name="Mueller-Auer S."/>
            <person name="Nawrocki A."/>
            <person name="Netter P."/>
            <person name="Neu R."/>
            <person name="Nombela C."/>
            <person name="Oliver S.G."/>
            <person name="Panzeri L."/>
            <person name="Paoluzi S."/>
            <person name="Plevani P."/>
            <person name="Portetelle D."/>
            <person name="Portillo F."/>
            <person name="Potier S."/>
            <person name="Purnelle B."/>
            <person name="Rieger M."/>
            <person name="Riles L."/>
            <person name="Rinaldi T."/>
            <person name="Robben J."/>
            <person name="Rodrigues-Pousada C."/>
            <person name="Rodriguez-Belmonte E."/>
            <person name="Rodriguez-Torres A.M."/>
            <person name="Rose M."/>
            <person name="Ruzzi M."/>
            <person name="Saliola M."/>
            <person name="Sanchez-Perez M."/>
            <person name="Schaefer B."/>
            <person name="Schaefer M."/>
            <person name="Scharfe M."/>
            <person name="Schmidheini T."/>
            <person name="Schreer A."/>
            <person name="Skala J."/>
            <person name="Souciet J.-L."/>
            <person name="Steensma H.Y."/>
            <person name="Talla E."/>
            <person name="Thierry A."/>
            <person name="Vandenbol M."/>
            <person name="van der Aart Q.J.M."/>
            <person name="Van Dyck L."/>
            <person name="Vanoni M."/>
            <person name="Verhasselt P."/>
            <person name="Voet M."/>
            <person name="Volckaert G."/>
            <person name="Wambutt R."/>
            <person name="Watson M.D."/>
            <person name="Weber N."/>
            <person name="Wedler E."/>
            <person name="Wedler H."/>
            <person name="Wipfli P."/>
            <person name="Wolf K."/>
            <person name="Wright L.F."/>
            <person name="Zaccaria P."/>
            <person name="Zimmermann M."/>
            <person name="Zollner A."/>
            <person name="Kleine K."/>
        </authorList>
    </citation>
    <scope>NUCLEOTIDE SEQUENCE [LARGE SCALE GENOMIC DNA]</scope>
    <source>
        <strain>ATCC 204508 / S288c</strain>
    </source>
</reference>
<reference key="4">
    <citation type="journal article" date="2014" name="G3 (Bethesda)">
        <title>The reference genome sequence of Saccharomyces cerevisiae: Then and now.</title>
        <authorList>
            <person name="Engel S.R."/>
            <person name="Dietrich F.S."/>
            <person name="Fisk D.G."/>
            <person name="Binkley G."/>
            <person name="Balakrishnan R."/>
            <person name="Costanzo M.C."/>
            <person name="Dwight S.S."/>
            <person name="Hitz B.C."/>
            <person name="Karra K."/>
            <person name="Nash R.S."/>
            <person name="Weng S."/>
            <person name="Wong E.D."/>
            <person name="Lloyd P."/>
            <person name="Skrzypek M.S."/>
            <person name="Miyasato S.R."/>
            <person name="Simison M."/>
            <person name="Cherry J.M."/>
        </authorList>
    </citation>
    <scope>GENOME REANNOTATION</scope>
    <source>
        <strain>ATCC 204508 / S288c</strain>
    </source>
</reference>
<reference key="5">
    <citation type="journal article" date="2007" name="Genome Res.">
        <title>Approaching a complete repository of sequence-verified protein-encoding clones for Saccharomyces cerevisiae.</title>
        <authorList>
            <person name="Hu Y."/>
            <person name="Rolfs A."/>
            <person name="Bhullar B."/>
            <person name="Murthy T.V.S."/>
            <person name="Zhu C."/>
            <person name="Berger M.F."/>
            <person name="Camargo A.A."/>
            <person name="Kelley F."/>
            <person name="McCarron S."/>
            <person name="Jepson D."/>
            <person name="Richardson A."/>
            <person name="Raphael J."/>
            <person name="Moreira D."/>
            <person name="Taycher E."/>
            <person name="Zuo D."/>
            <person name="Mohr S."/>
            <person name="Kane M.F."/>
            <person name="Williamson J."/>
            <person name="Simpson A.J.G."/>
            <person name="Bulyk M.L."/>
            <person name="Harlow E."/>
            <person name="Marsischky G."/>
            <person name="Kolodner R.D."/>
            <person name="LaBaer J."/>
        </authorList>
    </citation>
    <scope>NUCLEOTIDE SEQUENCE [GENOMIC DNA]</scope>
    <source>
        <strain>ATCC 204508 / S288c</strain>
    </source>
</reference>
<reference key="6">
    <citation type="journal article" date="1977" name="Biochem. Biophys. Res. Commun.">
        <title>Formyl-methenyl-methylenetetrahydrofolate synthetase (combined); correlation of enzymic activities with limited proteolytic degradation of the protein from yeast.</title>
        <authorList>
            <person name="Paukert J.L."/>
            <person name="Williams G.R."/>
            <person name="Rabinowitz J.C."/>
        </authorList>
    </citation>
    <scope>PROTEIN SEQUENCE OF 2-4</scope>
    <scope>FUNCTION</scope>
    <scope>SUBUNIT</scope>
</reference>
<reference key="7">
    <citation type="journal article" date="1989" name="Biochemistry">
        <title>Site-directed mutagenesis of yeast C1-tetrahydrofolate synthase: analysis of an overlapping active site in a multifunctional enzyme.</title>
        <authorList>
            <person name="Barlowe C.K."/>
            <person name="Williams M.E."/>
            <person name="Rabinowitz J.C."/>
            <person name="Appling D.R."/>
        </authorList>
    </citation>
    <scope>MUTAGENESIS</scope>
</reference>
<reference key="8">
    <citation type="journal article" date="1993" name="Proc. Natl. Acad. Sci. U.S.A.">
        <title>Function of yeast cytoplasmic C1-tetrahydrofolate synthase.</title>
        <authorList>
            <person name="Song J.M."/>
            <person name="Rabinowitz J.C."/>
        </authorList>
    </citation>
    <scope>FUNCTION</scope>
    <scope>CATALYTIC ACTIVITY</scope>
</reference>
<reference key="9">
    <citation type="journal article" date="2003" name="Nature">
        <title>Global analysis of protein localization in budding yeast.</title>
        <authorList>
            <person name="Huh W.-K."/>
            <person name="Falvo J.V."/>
            <person name="Gerke L.C."/>
            <person name="Carroll A.S."/>
            <person name="Howson R.W."/>
            <person name="Weissman J.S."/>
            <person name="O'Shea E.K."/>
        </authorList>
    </citation>
    <scope>SUBCELLULAR LOCATION [LARGE SCALE ANALYSIS]</scope>
</reference>
<reference key="10">
    <citation type="journal article" date="2003" name="Nature">
        <title>Global analysis of protein expression in yeast.</title>
        <authorList>
            <person name="Ghaemmaghami S."/>
            <person name="Huh W.-K."/>
            <person name="Bower K."/>
            <person name="Howson R.W."/>
            <person name="Belle A."/>
            <person name="Dephoure N."/>
            <person name="O'Shea E.K."/>
            <person name="Weissman J.S."/>
        </authorList>
    </citation>
    <scope>LEVEL OF PROTEIN EXPRESSION [LARGE SCALE ANALYSIS]</scope>
</reference>
<reference key="11">
    <citation type="journal article" date="2007" name="J. Proteome Res.">
        <title>Large-scale phosphorylation analysis of alpha-factor-arrested Saccharomyces cerevisiae.</title>
        <authorList>
            <person name="Li X."/>
            <person name="Gerber S.A."/>
            <person name="Rudner A.D."/>
            <person name="Beausoleil S.A."/>
            <person name="Haas W."/>
            <person name="Villen J."/>
            <person name="Elias J.E."/>
            <person name="Gygi S.P."/>
        </authorList>
    </citation>
    <scope>IDENTIFICATION BY MASS SPECTROMETRY [LARGE SCALE ANALYSIS]</scope>
    <source>
        <strain>ADR376</strain>
    </source>
</reference>
<reference key="12">
    <citation type="journal article" date="2008" name="Mol. Cell. Proteomics">
        <title>A multidimensional chromatography technology for in-depth phosphoproteome analysis.</title>
        <authorList>
            <person name="Albuquerque C.P."/>
            <person name="Smolka M.B."/>
            <person name="Payne S.H."/>
            <person name="Bafna V."/>
            <person name="Eng J."/>
            <person name="Zhou H."/>
        </authorList>
    </citation>
    <scope>PHOSPHORYLATION [LARGE SCALE ANALYSIS] AT SER-176</scope>
    <scope>IDENTIFICATION BY MASS SPECTROMETRY [LARGE SCALE ANALYSIS]</scope>
</reference>
<reference key="13">
    <citation type="journal article" date="2009" name="Science">
        <title>Global analysis of Cdk1 substrate phosphorylation sites provides insights into evolution.</title>
        <authorList>
            <person name="Holt L.J."/>
            <person name="Tuch B.B."/>
            <person name="Villen J."/>
            <person name="Johnson A.D."/>
            <person name="Gygi S.P."/>
            <person name="Morgan D.O."/>
        </authorList>
    </citation>
    <scope>PHOSPHORYLATION [LARGE SCALE ANALYSIS] AT SER-176; THR-318 AND SER-322</scope>
    <scope>IDENTIFICATION BY MASS SPECTROMETRY [LARGE SCALE ANALYSIS]</scope>
</reference>
<reference key="14">
    <citation type="journal article" date="2012" name="Proc. Natl. Acad. Sci. U.S.A.">
        <title>N-terminal acetylome analyses and functional insights of the N-terminal acetyltransferase NatB.</title>
        <authorList>
            <person name="Van Damme P."/>
            <person name="Lasa M."/>
            <person name="Polevoda B."/>
            <person name="Gazquez C."/>
            <person name="Elosegui-Artola A."/>
            <person name="Kim D.S."/>
            <person name="De Juan-Pardo E."/>
            <person name="Demeyer K."/>
            <person name="Hole K."/>
            <person name="Larrea E."/>
            <person name="Timmerman E."/>
            <person name="Prieto J."/>
            <person name="Arnesen T."/>
            <person name="Sherman F."/>
            <person name="Gevaert K."/>
            <person name="Aldabe R."/>
        </authorList>
    </citation>
    <scope>IDENTIFICATION BY MASS SPECTROMETRY [LARGE SCALE ANALYSIS]</scope>
</reference>
<protein>
    <recommendedName>
        <fullName>C-1-tetrahydrofolate synthase, cytoplasmic</fullName>
        <shortName>C1-THF synthase</shortName>
    </recommendedName>
    <domain>
        <recommendedName>
            <fullName>Methylenetetrahydrofolate dehydrogenase</fullName>
            <ecNumber evidence="6 7">1.5.1.5</ecNumber>
        </recommendedName>
    </domain>
    <domain>
        <recommendedName>
            <fullName>Methenyltetrahydrofolate cyclohydrolase</fullName>
            <ecNumber evidence="6 10">3.5.4.9</ecNumber>
        </recommendedName>
    </domain>
    <domain>
        <recommendedName>
            <fullName>Formyltetrahydrofolate synthetase</fullName>
            <ecNumber evidence="6 7">6.3.4.3</ecNumber>
        </recommendedName>
    </domain>
</protein>
<name>C1TC_YEAST</name>